<protein>
    <recommendedName>
        <fullName evidence="1">Serine--tRNA ligase</fullName>
        <ecNumber evidence="1">6.1.1.11</ecNumber>
    </recommendedName>
    <alternativeName>
        <fullName evidence="1">Seryl-tRNA synthetase</fullName>
        <shortName evidence="1">SerRS</shortName>
    </alternativeName>
    <alternativeName>
        <fullName evidence="1">Seryl-tRNA(Ser/Sec) synthetase</fullName>
    </alternativeName>
</protein>
<proteinExistence type="inferred from homology"/>
<feature type="chain" id="PRO_0000122172" description="Serine--tRNA ligase">
    <location>
        <begin position="1"/>
        <end position="460"/>
    </location>
</feature>
<feature type="region of interest" description="Disordered" evidence="2">
    <location>
        <begin position="50"/>
        <end position="71"/>
    </location>
</feature>
<feature type="region of interest" description="Disordered" evidence="2">
    <location>
        <begin position="109"/>
        <end position="129"/>
    </location>
</feature>
<feature type="compositionally biased region" description="Basic and acidic residues" evidence="2">
    <location>
        <begin position="50"/>
        <end position="65"/>
    </location>
</feature>
<feature type="compositionally biased region" description="Acidic residues" evidence="2">
    <location>
        <begin position="109"/>
        <end position="121"/>
    </location>
</feature>
<feature type="binding site" evidence="1">
    <location>
        <begin position="241"/>
        <end position="243"/>
    </location>
    <ligand>
        <name>L-serine</name>
        <dbReference type="ChEBI" id="CHEBI:33384"/>
    </ligand>
</feature>
<feature type="binding site" evidence="1">
    <location>
        <begin position="272"/>
        <end position="274"/>
    </location>
    <ligand>
        <name>ATP</name>
        <dbReference type="ChEBI" id="CHEBI:30616"/>
    </ligand>
</feature>
<feature type="binding site" evidence="1">
    <location>
        <position position="288"/>
    </location>
    <ligand>
        <name>ATP</name>
        <dbReference type="ChEBI" id="CHEBI:30616"/>
    </ligand>
</feature>
<feature type="binding site" evidence="1">
    <location>
        <position position="295"/>
    </location>
    <ligand>
        <name>L-serine</name>
        <dbReference type="ChEBI" id="CHEBI:33384"/>
    </ligand>
</feature>
<feature type="binding site" evidence="1">
    <location>
        <begin position="368"/>
        <end position="371"/>
    </location>
    <ligand>
        <name>ATP</name>
        <dbReference type="ChEBI" id="CHEBI:30616"/>
    </ligand>
</feature>
<feature type="binding site" evidence="1">
    <location>
        <position position="404"/>
    </location>
    <ligand>
        <name>L-serine</name>
        <dbReference type="ChEBI" id="CHEBI:33384"/>
    </ligand>
</feature>
<name>SYS_HALSA</name>
<dbReference type="EC" id="6.1.1.11" evidence="1"/>
<dbReference type="EMBL" id="AE004437">
    <property type="protein sequence ID" value="AAG20222.1"/>
    <property type="status" value="ALT_INIT"/>
    <property type="molecule type" value="Genomic_DNA"/>
</dbReference>
<dbReference type="PIR" id="B84357">
    <property type="entry name" value="B84357"/>
</dbReference>
<dbReference type="RefSeq" id="WP_010903523.1">
    <property type="nucleotide sequence ID" value="NC_002607.1"/>
</dbReference>
<dbReference type="SMR" id="Q9HNJ8"/>
<dbReference type="STRING" id="64091.VNG_2072G"/>
<dbReference type="PaxDb" id="64091-VNG_2072G"/>
<dbReference type="GeneID" id="68694649"/>
<dbReference type="KEGG" id="hal:VNG_2072G"/>
<dbReference type="PATRIC" id="fig|64091.14.peg.1580"/>
<dbReference type="HOGENOM" id="CLU_023797_0_1_2"/>
<dbReference type="InParanoid" id="Q9HNJ8"/>
<dbReference type="OrthoDB" id="35932at2157"/>
<dbReference type="PhylomeDB" id="Q9HNJ8"/>
<dbReference type="UniPathway" id="UPA00906">
    <property type="reaction ID" value="UER00895"/>
</dbReference>
<dbReference type="Proteomes" id="UP000000554">
    <property type="component" value="Chromosome"/>
</dbReference>
<dbReference type="GO" id="GO:0005737">
    <property type="term" value="C:cytoplasm"/>
    <property type="evidence" value="ECO:0007669"/>
    <property type="project" value="UniProtKB-SubCell"/>
</dbReference>
<dbReference type="GO" id="GO:0005524">
    <property type="term" value="F:ATP binding"/>
    <property type="evidence" value="ECO:0007669"/>
    <property type="project" value="UniProtKB-UniRule"/>
</dbReference>
<dbReference type="GO" id="GO:0004828">
    <property type="term" value="F:serine-tRNA ligase activity"/>
    <property type="evidence" value="ECO:0007669"/>
    <property type="project" value="UniProtKB-UniRule"/>
</dbReference>
<dbReference type="GO" id="GO:0016260">
    <property type="term" value="P:selenocysteine biosynthetic process"/>
    <property type="evidence" value="ECO:0007669"/>
    <property type="project" value="UniProtKB-UniRule"/>
</dbReference>
<dbReference type="GO" id="GO:0006434">
    <property type="term" value="P:seryl-tRNA aminoacylation"/>
    <property type="evidence" value="ECO:0007669"/>
    <property type="project" value="UniProtKB-UniRule"/>
</dbReference>
<dbReference type="CDD" id="cd00770">
    <property type="entry name" value="SerRS_core"/>
    <property type="match status" value="1"/>
</dbReference>
<dbReference type="Gene3D" id="3.30.930.10">
    <property type="entry name" value="Bira Bifunctional Protein, Domain 2"/>
    <property type="match status" value="1"/>
</dbReference>
<dbReference type="Gene3D" id="1.10.287.40">
    <property type="entry name" value="Serine-tRNA synthetase, tRNA binding domain"/>
    <property type="match status" value="1"/>
</dbReference>
<dbReference type="HAMAP" id="MF_00176">
    <property type="entry name" value="Ser_tRNA_synth_type1"/>
    <property type="match status" value="1"/>
</dbReference>
<dbReference type="InterPro" id="IPR002314">
    <property type="entry name" value="aa-tRNA-synt_IIb"/>
</dbReference>
<dbReference type="InterPro" id="IPR006195">
    <property type="entry name" value="aa-tRNA-synth_II"/>
</dbReference>
<dbReference type="InterPro" id="IPR045864">
    <property type="entry name" value="aa-tRNA-synth_II/BPL/LPL"/>
</dbReference>
<dbReference type="InterPro" id="IPR002317">
    <property type="entry name" value="Ser-tRNA-ligase_type_1"/>
</dbReference>
<dbReference type="InterPro" id="IPR015866">
    <property type="entry name" value="Ser-tRNA-synth_1_N"/>
</dbReference>
<dbReference type="InterPro" id="IPR042103">
    <property type="entry name" value="SerRS_1_N_sf"/>
</dbReference>
<dbReference type="InterPro" id="IPR033729">
    <property type="entry name" value="SerRS_core"/>
</dbReference>
<dbReference type="InterPro" id="IPR010978">
    <property type="entry name" value="tRNA-bd_arm"/>
</dbReference>
<dbReference type="NCBIfam" id="TIGR00414">
    <property type="entry name" value="serS"/>
    <property type="match status" value="1"/>
</dbReference>
<dbReference type="PANTHER" id="PTHR43697:SF1">
    <property type="entry name" value="SERINE--TRNA LIGASE"/>
    <property type="match status" value="1"/>
</dbReference>
<dbReference type="PANTHER" id="PTHR43697">
    <property type="entry name" value="SERYL-TRNA SYNTHETASE"/>
    <property type="match status" value="1"/>
</dbReference>
<dbReference type="Pfam" id="PF02403">
    <property type="entry name" value="Seryl_tRNA_N"/>
    <property type="match status" value="1"/>
</dbReference>
<dbReference type="Pfam" id="PF00587">
    <property type="entry name" value="tRNA-synt_2b"/>
    <property type="match status" value="1"/>
</dbReference>
<dbReference type="PIRSF" id="PIRSF001529">
    <property type="entry name" value="Ser-tRNA-synth_IIa"/>
    <property type="match status" value="1"/>
</dbReference>
<dbReference type="PRINTS" id="PR00981">
    <property type="entry name" value="TRNASYNTHSER"/>
</dbReference>
<dbReference type="SUPFAM" id="SSF55681">
    <property type="entry name" value="Class II aaRS and biotin synthetases"/>
    <property type="match status" value="1"/>
</dbReference>
<dbReference type="SUPFAM" id="SSF46589">
    <property type="entry name" value="tRNA-binding arm"/>
    <property type="match status" value="1"/>
</dbReference>
<dbReference type="PROSITE" id="PS50862">
    <property type="entry name" value="AA_TRNA_LIGASE_II"/>
    <property type="match status" value="1"/>
</dbReference>
<keyword id="KW-0030">Aminoacyl-tRNA synthetase</keyword>
<keyword id="KW-0067">ATP-binding</keyword>
<keyword id="KW-0963">Cytoplasm</keyword>
<keyword id="KW-0436">Ligase</keyword>
<keyword id="KW-0547">Nucleotide-binding</keyword>
<keyword id="KW-0648">Protein biosynthesis</keyword>
<keyword id="KW-1185">Reference proteome</keyword>
<accession>Q9HNJ8</accession>
<reference key="1">
    <citation type="journal article" date="2000" name="Proc. Natl. Acad. Sci. U.S.A.">
        <title>Genome sequence of Halobacterium species NRC-1.</title>
        <authorList>
            <person name="Ng W.V."/>
            <person name="Kennedy S.P."/>
            <person name="Mahairas G.G."/>
            <person name="Berquist B."/>
            <person name="Pan M."/>
            <person name="Shukla H.D."/>
            <person name="Lasky S.R."/>
            <person name="Baliga N.S."/>
            <person name="Thorsson V."/>
            <person name="Sbrogna J."/>
            <person name="Swartzell S."/>
            <person name="Weir D."/>
            <person name="Hall J."/>
            <person name="Dahl T.A."/>
            <person name="Welti R."/>
            <person name="Goo Y.A."/>
            <person name="Leithauser B."/>
            <person name="Keller K."/>
            <person name="Cruz R."/>
            <person name="Danson M.J."/>
            <person name="Hough D.W."/>
            <person name="Maddocks D.G."/>
            <person name="Jablonski P.E."/>
            <person name="Krebs M.P."/>
            <person name="Angevine C.M."/>
            <person name="Dale H."/>
            <person name="Isenbarger T.A."/>
            <person name="Peck R.F."/>
            <person name="Pohlschroder M."/>
            <person name="Spudich J.L."/>
            <person name="Jung K.-H."/>
            <person name="Alam M."/>
            <person name="Freitas T."/>
            <person name="Hou S."/>
            <person name="Daniels C.J."/>
            <person name="Dennis P.P."/>
            <person name="Omer A.D."/>
            <person name="Ebhardt H."/>
            <person name="Lowe T.M."/>
            <person name="Liang P."/>
            <person name="Riley M."/>
            <person name="Hood L."/>
            <person name="DasSarma S."/>
        </authorList>
    </citation>
    <scope>NUCLEOTIDE SEQUENCE [LARGE SCALE GENOMIC DNA]</scope>
    <source>
        <strain>ATCC 700922 / JCM 11081 / NRC-1</strain>
    </source>
</reference>
<organism>
    <name type="scientific">Halobacterium salinarum (strain ATCC 700922 / JCM 11081 / NRC-1)</name>
    <name type="common">Halobacterium halobium</name>
    <dbReference type="NCBI Taxonomy" id="64091"/>
    <lineage>
        <taxon>Archaea</taxon>
        <taxon>Methanobacteriati</taxon>
        <taxon>Methanobacteriota</taxon>
        <taxon>Stenosarchaea group</taxon>
        <taxon>Halobacteria</taxon>
        <taxon>Halobacteriales</taxon>
        <taxon>Halobacteriaceae</taxon>
        <taxon>Halobacterium</taxon>
        <taxon>Halobacterium salinarum NRC-34001</taxon>
    </lineage>
</organism>
<evidence type="ECO:0000255" key="1">
    <source>
        <dbReference type="HAMAP-Rule" id="MF_00176"/>
    </source>
</evidence>
<evidence type="ECO:0000256" key="2">
    <source>
        <dbReference type="SAM" id="MobiDB-lite"/>
    </source>
</evidence>
<evidence type="ECO:0000305" key="3"/>
<sequence>MLSRQFVREHPEKVRDALDAKGVDADLDRILEVDEEWRELKARGDELRHDRNEVSSKIGELKQAGDEDAAQEAIERSQALKDELADVEARADDLEAELERLLLTLPMVPDEDAPVGDSEAENVERRREGFDDRRDLPESVVPHYDLGEELDILDFERGAKVSGGGFYFSKGAGARLEHALVQFMLDVHREQGYEDVFPPMPVSARSMEGTGQFPKFVEDAYRIGGENDADYDDDDLWLLPTAEVPVTNMYRDEILLDDDLPVKHQAYSPNFRREAGEHGTETRGIVRVHQFNKVELVNFVRPEDSAERFHGLLDEAEAVLRRLDLPYRVLEMCTGDMGFTQAKKYDIEVWAPGDDMDGGPEMGGRWLEVSSVSNFKDFQARRADIQYRPERHESAEHLHTLNGSGVAVPRVLVAILEYYQNDDGTVTVPEALQPYMNGQTRIEGSRKVGESALGDGDREA</sequence>
<gene>
    <name evidence="1" type="primary">serS</name>
    <name type="ordered locus">VNG_2072G</name>
</gene>
<comment type="function">
    <text evidence="1">Catalyzes the attachment of serine to tRNA(Ser). Is also able to aminoacylate tRNA(Sec) with serine, to form the misacylated tRNA L-seryl-tRNA(Sec), which will be further converted into selenocysteinyl-tRNA(Sec).</text>
</comment>
<comment type="catalytic activity">
    <reaction evidence="1">
        <text>tRNA(Ser) + L-serine + ATP = L-seryl-tRNA(Ser) + AMP + diphosphate + H(+)</text>
        <dbReference type="Rhea" id="RHEA:12292"/>
        <dbReference type="Rhea" id="RHEA-COMP:9669"/>
        <dbReference type="Rhea" id="RHEA-COMP:9703"/>
        <dbReference type="ChEBI" id="CHEBI:15378"/>
        <dbReference type="ChEBI" id="CHEBI:30616"/>
        <dbReference type="ChEBI" id="CHEBI:33019"/>
        <dbReference type="ChEBI" id="CHEBI:33384"/>
        <dbReference type="ChEBI" id="CHEBI:78442"/>
        <dbReference type="ChEBI" id="CHEBI:78533"/>
        <dbReference type="ChEBI" id="CHEBI:456215"/>
        <dbReference type="EC" id="6.1.1.11"/>
    </reaction>
</comment>
<comment type="catalytic activity">
    <reaction evidence="1">
        <text>tRNA(Sec) + L-serine + ATP = L-seryl-tRNA(Sec) + AMP + diphosphate + H(+)</text>
        <dbReference type="Rhea" id="RHEA:42580"/>
        <dbReference type="Rhea" id="RHEA-COMP:9742"/>
        <dbReference type="Rhea" id="RHEA-COMP:10128"/>
        <dbReference type="ChEBI" id="CHEBI:15378"/>
        <dbReference type="ChEBI" id="CHEBI:30616"/>
        <dbReference type="ChEBI" id="CHEBI:33019"/>
        <dbReference type="ChEBI" id="CHEBI:33384"/>
        <dbReference type="ChEBI" id="CHEBI:78442"/>
        <dbReference type="ChEBI" id="CHEBI:78533"/>
        <dbReference type="ChEBI" id="CHEBI:456215"/>
        <dbReference type="EC" id="6.1.1.11"/>
    </reaction>
</comment>
<comment type="pathway">
    <text evidence="1">Aminoacyl-tRNA biosynthesis; selenocysteinyl-tRNA(Sec) biosynthesis; L-seryl-tRNA(Sec) from L-serine and tRNA(Sec): step 1/1.</text>
</comment>
<comment type="subunit">
    <text evidence="1">Homodimer. The tRNA molecule binds across the dimer.</text>
</comment>
<comment type="subcellular location">
    <subcellularLocation>
        <location evidence="1">Cytoplasm</location>
    </subcellularLocation>
</comment>
<comment type="domain">
    <text evidence="1">Consists of two distinct domains, a catalytic core and a N-terminal extension that is involved in tRNA binding.</text>
</comment>
<comment type="similarity">
    <text evidence="1">Belongs to the class-II aminoacyl-tRNA synthetase family. Type-1 seryl-tRNA synthetase subfamily.</text>
</comment>
<comment type="sequence caution" evidence="3">
    <conflict type="erroneous initiation">
        <sequence resource="EMBL-CDS" id="AAG20222"/>
    </conflict>
</comment>